<gene>
    <name type="primary">hulA</name>
    <name type="ORF">AO090012000923</name>
</gene>
<feature type="chain" id="PRO_0000395708" description="Probable E3 ubiquitin-protein ligase hulA">
    <location>
        <begin position="1"/>
        <end position="816"/>
    </location>
</feature>
<feature type="domain" description="C2" evidence="3">
    <location>
        <begin position="1"/>
        <end position="112"/>
    </location>
</feature>
<feature type="domain" description="WW 1" evidence="5">
    <location>
        <begin position="229"/>
        <end position="262"/>
    </location>
</feature>
<feature type="domain" description="WW 2" evidence="5">
    <location>
        <begin position="333"/>
        <end position="366"/>
    </location>
</feature>
<feature type="domain" description="WW 3" evidence="5">
    <location>
        <begin position="393"/>
        <end position="426"/>
    </location>
</feature>
<feature type="domain" description="HECT" evidence="4">
    <location>
        <begin position="482"/>
        <end position="816"/>
    </location>
</feature>
<feature type="region of interest" description="Disordered" evidence="6">
    <location>
        <begin position="134"/>
        <end position="238"/>
    </location>
</feature>
<feature type="region of interest" description="Disordered" evidence="6">
    <location>
        <begin position="253"/>
        <end position="353"/>
    </location>
</feature>
<feature type="compositionally biased region" description="Polar residues" evidence="6">
    <location>
        <begin position="151"/>
        <end position="168"/>
    </location>
</feature>
<feature type="compositionally biased region" description="Polar residues" evidence="6">
    <location>
        <begin position="177"/>
        <end position="202"/>
    </location>
</feature>
<feature type="compositionally biased region" description="Polar residues" evidence="6">
    <location>
        <begin position="217"/>
        <end position="226"/>
    </location>
</feature>
<feature type="compositionally biased region" description="Polar residues" evidence="6">
    <location>
        <begin position="253"/>
        <end position="270"/>
    </location>
</feature>
<feature type="compositionally biased region" description="Basic and acidic residues" evidence="6">
    <location>
        <begin position="279"/>
        <end position="294"/>
    </location>
</feature>
<feature type="compositionally biased region" description="Polar residues" evidence="6">
    <location>
        <begin position="295"/>
        <end position="309"/>
    </location>
</feature>
<feature type="compositionally biased region" description="Low complexity" evidence="6">
    <location>
        <begin position="310"/>
        <end position="333"/>
    </location>
</feature>
<feature type="active site" description="Glycyl thioester intermediate" evidence="4">
    <location>
        <position position="784"/>
    </location>
</feature>
<protein>
    <recommendedName>
        <fullName>Probable E3 ubiquitin-protein ligase hulA</fullName>
        <ecNumber>2.3.2.26</ecNumber>
    </recommendedName>
    <alternativeName>
        <fullName>HECT ubiquitin ligase A</fullName>
    </alternativeName>
    <alternativeName>
        <fullName>HECT-type E3 ubiquitin transferase hulA</fullName>
    </alternativeName>
</protein>
<organism>
    <name type="scientific">Aspergillus oryzae (strain ATCC 42149 / RIB 40)</name>
    <name type="common">Yellow koji mold</name>
    <dbReference type="NCBI Taxonomy" id="510516"/>
    <lineage>
        <taxon>Eukaryota</taxon>
        <taxon>Fungi</taxon>
        <taxon>Dikarya</taxon>
        <taxon>Ascomycota</taxon>
        <taxon>Pezizomycotina</taxon>
        <taxon>Eurotiomycetes</taxon>
        <taxon>Eurotiomycetidae</taxon>
        <taxon>Eurotiales</taxon>
        <taxon>Aspergillaceae</taxon>
        <taxon>Aspergillus</taxon>
        <taxon>Aspergillus subgen. Circumdati</taxon>
    </lineage>
</organism>
<evidence type="ECO:0000250" key="1">
    <source>
        <dbReference type="UniProtKB" id="P39940"/>
    </source>
</evidence>
<evidence type="ECO:0000250" key="2">
    <source>
        <dbReference type="UniProtKB" id="Q5BDP1"/>
    </source>
</evidence>
<evidence type="ECO:0000255" key="3">
    <source>
        <dbReference type="PROSITE-ProRule" id="PRU00041"/>
    </source>
</evidence>
<evidence type="ECO:0000255" key="4">
    <source>
        <dbReference type="PROSITE-ProRule" id="PRU00104"/>
    </source>
</evidence>
<evidence type="ECO:0000255" key="5">
    <source>
        <dbReference type="PROSITE-ProRule" id="PRU00224"/>
    </source>
</evidence>
<evidence type="ECO:0000256" key="6">
    <source>
        <dbReference type="SAM" id="MobiDB-lite"/>
    </source>
</evidence>
<evidence type="ECO:0000305" key="7"/>
<dbReference type="EC" id="2.3.2.26"/>
<dbReference type="EMBL" id="BA000052">
    <property type="protein sequence ID" value="BAE61024.1"/>
    <property type="status" value="ALT_SEQ"/>
    <property type="molecule type" value="Genomic_DNA"/>
</dbReference>
<dbReference type="SMR" id="Q2UBP1"/>
<dbReference type="STRING" id="510516.Q2UBP1"/>
<dbReference type="EnsemblFungi" id="BAE61024">
    <property type="protein sequence ID" value="BAE61024"/>
    <property type="gene ID" value="AO090012000923"/>
</dbReference>
<dbReference type="UniPathway" id="UPA00143"/>
<dbReference type="Proteomes" id="UP000006564">
    <property type="component" value="Chromosome 4"/>
</dbReference>
<dbReference type="GO" id="GO:0005737">
    <property type="term" value="C:cytoplasm"/>
    <property type="evidence" value="ECO:0007669"/>
    <property type="project" value="UniProtKB-SubCell"/>
</dbReference>
<dbReference type="GO" id="GO:0061630">
    <property type="term" value="F:ubiquitin protein ligase activity"/>
    <property type="evidence" value="ECO:0007669"/>
    <property type="project" value="InterPro"/>
</dbReference>
<dbReference type="GO" id="GO:0046907">
    <property type="term" value="P:intracellular transport"/>
    <property type="evidence" value="ECO:0007669"/>
    <property type="project" value="UniProtKB-ARBA"/>
</dbReference>
<dbReference type="GO" id="GO:0016567">
    <property type="term" value="P:protein ubiquitination"/>
    <property type="evidence" value="ECO:0007669"/>
    <property type="project" value="UniProtKB-UniPathway"/>
</dbReference>
<dbReference type="GO" id="GO:0006511">
    <property type="term" value="P:ubiquitin-dependent protein catabolic process"/>
    <property type="evidence" value="ECO:0007669"/>
    <property type="project" value="InterPro"/>
</dbReference>
<dbReference type="CDD" id="cd08382">
    <property type="entry name" value="C2_Smurf-like"/>
    <property type="match status" value="1"/>
</dbReference>
<dbReference type="CDD" id="cd00078">
    <property type="entry name" value="HECTc"/>
    <property type="match status" value="1"/>
</dbReference>
<dbReference type="CDD" id="cd00201">
    <property type="entry name" value="WW"/>
    <property type="match status" value="3"/>
</dbReference>
<dbReference type="FunFam" id="2.20.70.10:FF:000011">
    <property type="entry name" value="E3 ubiquitin-protein ligase"/>
    <property type="match status" value="1"/>
</dbReference>
<dbReference type="FunFam" id="2.20.70.10:FF:000017">
    <property type="entry name" value="E3 ubiquitin-protein ligase"/>
    <property type="match status" value="1"/>
</dbReference>
<dbReference type="FunFam" id="2.20.70.10:FF:000053">
    <property type="entry name" value="E3 ubiquitin-protein ligase"/>
    <property type="match status" value="1"/>
</dbReference>
<dbReference type="FunFam" id="2.60.40.150:FF:000074">
    <property type="entry name" value="E3 ubiquitin-protein ligase"/>
    <property type="match status" value="1"/>
</dbReference>
<dbReference type="FunFam" id="3.90.1750.10:FF:000005">
    <property type="entry name" value="E3 ubiquitin-protein ligase"/>
    <property type="match status" value="1"/>
</dbReference>
<dbReference type="FunFam" id="3.30.2160.10:FF:000001">
    <property type="entry name" value="E3 ubiquitin-protein ligase NEDD4-like"/>
    <property type="match status" value="1"/>
</dbReference>
<dbReference type="FunFam" id="3.30.2410.10:FF:000001">
    <property type="entry name" value="E3 ubiquitin-protein ligase NEDD4-like"/>
    <property type="match status" value="1"/>
</dbReference>
<dbReference type="Gene3D" id="2.20.70.10">
    <property type="match status" value="2"/>
</dbReference>
<dbReference type="Gene3D" id="2.60.40.150">
    <property type="entry name" value="C2 domain"/>
    <property type="match status" value="1"/>
</dbReference>
<dbReference type="Gene3D" id="3.30.2160.10">
    <property type="entry name" value="Hect, E3 ligase catalytic domain"/>
    <property type="match status" value="1"/>
</dbReference>
<dbReference type="Gene3D" id="3.30.2410.10">
    <property type="entry name" value="Hect, E3 ligase catalytic domain"/>
    <property type="match status" value="1"/>
</dbReference>
<dbReference type="Gene3D" id="3.90.1750.10">
    <property type="entry name" value="Hect, E3 ligase catalytic domains"/>
    <property type="match status" value="1"/>
</dbReference>
<dbReference type="InterPro" id="IPR000008">
    <property type="entry name" value="C2_dom"/>
</dbReference>
<dbReference type="InterPro" id="IPR035892">
    <property type="entry name" value="C2_domain_sf"/>
</dbReference>
<dbReference type="InterPro" id="IPR024928">
    <property type="entry name" value="E3_ub_ligase_SMURF1"/>
</dbReference>
<dbReference type="InterPro" id="IPR050409">
    <property type="entry name" value="E3_ubiq-protein_ligase"/>
</dbReference>
<dbReference type="InterPro" id="IPR000569">
    <property type="entry name" value="HECT_dom"/>
</dbReference>
<dbReference type="InterPro" id="IPR035983">
    <property type="entry name" value="Hect_E3_ubiquitin_ligase"/>
</dbReference>
<dbReference type="InterPro" id="IPR001202">
    <property type="entry name" value="WW_dom"/>
</dbReference>
<dbReference type="InterPro" id="IPR036020">
    <property type="entry name" value="WW_dom_sf"/>
</dbReference>
<dbReference type="PANTHER" id="PTHR11254:SF440">
    <property type="entry name" value="E3 UBIQUITIN-PROTEIN LIGASE NEDD-4"/>
    <property type="match status" value="1"/>
</dbReference>
<dbReference type="PANTHER" id="PTHR11254">
    <property type="entry name" value="HECT DOMAIN UBIQUITIN-PROTEIN LIGASE"/>
    <property type="match status" value="1"/>
</dbReference>
<dbReference type="Pfam" id="PF00168">
    <property type="entry name" value="C2"/>
    <property type="match status" value="1"/>
</dbReference>
<dbReference type="Pfam" id="PF00632">
    <property type="entry name" value="HECT"/>
    <property type="match status" value="1"/>
</dbReference>
<dbReference type="Pfam" id="PF00397">
    <property type="entry name" value="WW"/>
    <property type="match status" value="3"/>
</dbReference>
<dbReference type="PIRSF" id="PIRSF001569">
    <property type="entry name" value="E3_ub_ligase_SMURF1"/>
    <property type="match status" value="1"/>
</dbReference>
<dbReference type="SMART" id="SM00239">
    <property type="entry name" value="C2"/>
    <property type="match status" value="1"/>
</dbReference>
<dbReference type="SMART" id="SM00119">
    <property type="entry name" value="HECTc"/>
    <property type="match status" value="1"/>
</dbReference>
<dbReference type="SMART" id="SM00456">
    <property type="entry name" value="WW"/>
    <property type="match status" value="3"/>
</dbReference>
<dbReference type="SUPFAM" id="SSF49562">
    <property type="entry name" value="C2 domain (Calcium/lipid-binding domain, CaLB)"/>
    <property type="match status" value="1"/>
</dbReference>
<dbReference type="SUPFAM" id="SSF56204">
    <property type="entry name" value="Hect, E3 ligase catalytic domain"/>
    <property type="match status" value="1"/>
</dbReference>
<dbReference type="SUPFAM" id="SSF51045">
    <property type="entry name" value="WW domain"/>
    <property type="match status" value="3"/>
</dbReference>
<dbReference type="PROSITE" id="PS50004">
    <property type="entry name" value="C2"/>
    <property type="match status" value="1"/>
</dbReference>
<dbReference type="PROSITE" id="PS50237">
    <property type="entry name" value="HECT"/>
    <property type="match status" value="1"/>
</dbReference>
<dbReference type="PROSITE" id="PS01159">
    <property type="entry name" value="WW_DOMAIN_1"/>
    <property type="match status" value="3"/>
</dbReference>
<dbReference type="PROSITE" id="PS50020">
    <property type="entry name" value="WW_DOMAIN_2"/>
    <property type="match status" value="3"/>
</dbReference>
<name>RSP5_ASPOR</name>
<accession>Q2UBP1</accession>
<comment type="function">
    <text evidence="2">E3 ubiquitin-protein ligase which accepts ubiquitin from an E2 ubiquitin-conjugating enzyme in the form of a thioester and then directly transfers the ubiquitin to targeted substrates. Probably involved in the regulatory network controlling carbon source utilization.</text>
</comment>
<comment type="catalytic activity">
    <reaction>
        <text>S-ubiquitinyl-[E2 ubiquitin-conjugating enzyme]-L-cysteine + [acceptor protein]-L-lysine = [E2 ubiquitin-conjugating enzyme]-L-cysteine + N(6)-ubiquitinyl-[acceptor protein]-L-lysine.</text>
        <dbReference type="EC" id="2.3.2.26"/>
    </reaction>
</comment>
<comment type="pathway">
    <text>Protein modification; protein ubiquitination.</text>
</comment>
<comment type="subunit">
    <text evidence="2">Interacts with creD.</text>
</comment>
<comment type="subcellular location">
    <subcellularLocation>
        <location evidence="1">Cytoplasm</location>
    </subcellularLocation>
</comment>
<comment type="similarity">
    <text evidence="7">Belongs to the RSP5/NEDD4 family.</text>
</comment>
<comment type="sequence caution" evidence="7">
    <conflict type="erroneous gene model prediction">
        <sequence resource="EMBL-CDS" id="BAE61024"/>
    </conflict>
</comment>
<reference key="1">
    <citation type="journal article" date="2005" name="Nature">
        <title>Genome sequencing and analysis of Aspergillus oryzae.</title>
        <authorList>
            <person name="Machida M."/>
            <person name="Asai K."/>
            <person name="Sano M."/>
            <person name="Tanaka T."/>
            <person name="Kumagai T."/>
            <person name="Terai G."/>
            <person name="Kusumoto K."/>
            <person name="Arima T."/>
            <person name="Akita O."/>
            <person name="Kashiwagi Y."/>
            <person name="Abe K."/>
            <person name="Gomi K."/>
            <person name="Horiuchi H."/>
            <person name="Kitamoto K."/>
            <person name="Kobayashi T."/>
            <person name="Takeuchi M."/>
            <person name="Denning D.W."/>
            <person name="Galagan J.E."/>
            <person name="Nierman W.C."/>
            <person name="Yu J."/>
            <person name="Archer D.B."/>
            <person name="Bennett J.W."/>
            <person name="Bhatnagar D."/>
            <person name="Cleveland T.E."/>
            <person name="Fedorova N.D."/>
            <person name="Gotoh O."/>
            <person name="Horikawa H."/>
            <person name="Hosoyama A."/>
            <person name="Ichinomiya M."/>
            <person name="Igarashi R."/>
            <person name="Iwashita K."/>
            <person name="Juvvadi P.R."/>
            <person name="Kato M."/>
            <person name="Kato Y."/>
            <person name="Kin T."/>
            <person name="Kokubun A."/>
            <person name="Maeda H."/>
            <person name="Maeyama N."/>
            <person name="Maruyama J."/>
            <person name="Nagasaki H."/>
            <person name="Nakajima T."/>
            <person name="Oda K."/>
            <person name="Okada K."/>
            <person name="Paulsen I."/>
            <person name="Sakamoto K."/>
            <person name="Sawano T."/>
            <person name="Takahashi M."/>
            <person name="Takase K."/>
            <person name="Terabayashi Y."/>
            <person name="Wortman J.R."/>
            <person name="Yamada O."/>
            <person name="Yamagata Y."/>
            <person name="Anazawa H."/>
            <person name="Hata Y."/>
            <person name="Koide Y."/>
            <person name="Komori T."/>
            <person name="Koyama Y."/>
            <person name="Minetoki T."/>
            <person name="Suharnan S."/>
            <person name="Tanaka A."/>
            <person name="Isono K."/>
            <person name="Kuhara S."/>
            <person name="Ogasawara N."/>
            <person name="Kikuchi H."/>
        </authorList>
    </citation>
    <scope>NUCLEOTIDE SEQUENCE [LARGE SCALE GENOMIC DNA]</scope>
    <source>
        <strain>ATCC 42149 / RIB 40</strain>
    </source>
</reference>
<sequence length="816" mass="92553">MGSNLPAQPNLRVTIIAADGLYKRDVFRFPDPFAVATVGGEQTHTTSVIKKTLNPYWNEMFDLRVNEDSILAIQIFDQKKFKKKDQGFLGVINVRIGDVIDLQMGGDEMLTRDLKKSNDNLVVHGKLIINLSTNLSTPNTNQANGLHRSHMQPSTSSGLVPQVSASTPQPSPGPSQADPTASNPSLHPQRVPSTTRPSSTIVPANGPPAPPNGQQGSRTNLSSFEDSQGRLPAGWERREDNLGRTYYVDHNTRTTTWTRPSNNYNEQTSRTQREASMQLERRAHQSRMLPEDRTGASSPNLQENQQQAQTPPAGGSASAVSMMATGATTAGTGELPPGWEQRTTPEGRPYFVDHNTRTTTWVDPRRQQYIRMYGQNANGTNTTIQQQPVSQLGPLPSGWEMRLTNTARVYFVDHNTKTTTWDDPRLPSSLDQGVPQYKRDFRRKLIYFRSQPALRIMSGQCHVKVRRNNIFEDSYAEIMRQSASDLKKRLMIKFDGEDGLDYGGLSRREFFFLLSHEMFNPFYCLFEYSAHDNYTLQINPHSGVNPEHLNYFKFIGRVVGLAIFHRRFLDSFFIGAFYKMMLRKKVSLQDMEGVDEDLHRNLTWTLDNDIEGIIELTFAVDDEKFGERRTIDLKPGGRDIPVTNENKGEYVELVTEWKIVKRVEEQFNAFMSGFNELIPADLVNVFDERELELLIGGIADIDVDDWKKHTDYRGYQESDEVIQNFWKIVRTWDAEQKSRLLQFTTGTSRIPVNGFKDLQGSDGPRRFTIEKSGDPGALPKSHTCFNRLDLPPYKTNDVLEHKLSIAVEETLGFGQE</sequence>
<keyword id="KW-0963">Cytoplasm</keyword>
<keyword id="KW-1185">Reference proteome</keyword>
<keyword id="KW-0677">Repeat</keyword>
<keyword id="KW-0808">Transferase</keyword>
<keyword id="KW-0833">Ubl conjugation pathway</keyword>
<proteinExistence type="inferred from homology"/>